<accession>Q8ST79</accession>
<organism>
    <name type="scientific">Encephalitozoon cuniculi (strain GB-M1)</name>
    <name type="common">Microsporidian parasite</name>
    <dbReference type="NCBI Taxonomy" id="284813"/>
    <lineage>
        <taxon>Eukaryota</taxon>
        <taxon>Fungi</taxon>
        <taxon>Fungi incertae sedis</taxon>
        <taxon>Microsporidia</taxon>
        <taxon>Unikaryonidae</taxon>
        <taxon>Encephalitozoon</taxon>
    </lineage>
</organism>
<name>Y106_ENCCU</name>
<dbReference type="EMBL" id="AL391737">
    <property type="protein sequence ID" value="CAD25026.1"/>
    <property type="molecule type" value="Genomic_DNA"/>
</dbReference>
<dbReference type="EMBL" id="AL391737">
    <property type="protein sequence ID" value="CAD24878.1"/>
    <property type="molecule type" value="Genomic_DNA"/>
</dbReference>
<dbReference type="EMBL" id="AL590442">
    <property type="protein sequence ID" value="CAD25187.1"/>
    <property type="molecule type" value="Genomic_DNA"/>
</dbReference>
<dbReference type="EMBL" id="AL590444">
    <property type="protein sequence ID" value="CAD25194.1"/>
    <property type="molecule type" value="Genomic_DNA"/>
</dbReference>
<dbReference type="EMBL" id="AL590448">
    <property type="protein sequence ID" value="CAD26513.1"/>
    <property type="molecule type" value="Genomic_DNA"/>
</dbReference>
<dbReference type="RefSeq" id="NP_001402094.1">
    <property type="nucleotide sequence ID" value="NM_001415573.1"/>
</dbReference>
<dbReference type="RefSeq" id="NP_584683.1">
    <property type="nucleotide sequence ID" value="NM_001040872.1"/>
</dbReference>
<dbReference type="RefSeq" id="NP_584690.1">
    <property type="nucleotide sequence ID" value="NM_001041040.1"/>
</dbReference>
<dbReference type="RefSeq" id="NP_597337.1">
    <property type="nucleotide sequence ID" value="NM_001041946.1"/>
</dbReference>
<dbReference type="RefSeq" id="XP_965843.1">
    <property type="nucleotide sequence ID" value="XM_960750.1"/>
</dbReference>
<dbReference type="RefSeq" id="XP_965991.1">
    <property type="nucleotide sequence ID" value="XM_960898.1"/>
</dbReference>
<dbReference type="GeneID" id="858673"/>
<dbReference type="GeneID" id="858838"/>
<dbReference type="GeneID" id="859759"/>
<dbReference type="GeneID" id="860179"/>
<dbReference type="KEGG" id="ecu:ECU02_1580"/>
<dbReference type="KEGG" id="ecu:ECU04_0070"/>
<dbReference type="KEGG" id="ecu:ECU08_2110"/>
<dbReference type="VEuPathDB" id="MicrosporidiaDB:ECU01_0060"/>
<dbReference type="VEuPathDB" id="MicrosporidiaDB:ECU01_1550"/>
<dbReference type="VEuPathDB" id="MicrosporidiaDB:ECU02_1580"/>
<dbReference type="VEuPathDB" id="MicrosporidiaDB:ECU04_0070"/>
<dbReference type="VEuPathDB" id="MicrosporidiaDB:ECU08_2110"/>
<dbReference type="HOGENOM" id="CLU_2291681_0_0_1"/>
<dbReference type="InParanoid" id="Q8ST79"/>
<dbReference type="Proteomes" id="UP000000819">
    <property type="component" value="Chromosome I"/>
</dbReference>
<dbReference type="Proteomes" id="UP000000819">
    <property type="component" value="Chromosome II"/>
</dbReference>
<dbReference type="Proteomes" id="UP000000819">
    <property type="component" value="Chromosome IV"/>
</dbReference>
<dbReference type="Proteomes" id="UP000000819">
    <property type="component" value="Chromosome VIII"/>
</dbReference>
<feature type="chain" id="PRO_0000223082" description="Uncharacterized protein ECU01_0060/ECU01_1550/ECU02_1580/ECU04_0070/ ECU08_2110">
    <location>
        <begin position="1"/>
        <end position="101"/>
    </location>
</feature>
<proteinExistence type="predicted"/>
<gene>
    <name type="ordered locus">ECU01_0060</name>
</gene>
<gene>
    <name type="ordered locus">ECU01_1550</name>
</gene>
<gene>
    <name type="ordered locus">ECU02_1580</name>
</gene>
<gene>
    <name type="ordered locus">ECU04_0070</name>
</gene>
<gene>
    <name type="ordered locus">ECU08_2110</name>
</gene>
<protein>
    <recommendedName>
        <fullName>Uncharacterized protein ECU01_0060/ECU01_1550/ECU02_1580/ECU04_0070/ ECU08_2110</fullName>
    </recommendedName>
</protein>
<sequence>MRSISVGLDREESGSDGLCLGLVVLATLAAGFVAGSDVLRCWGFGPATGDVCLWVEAGFWRCPLPGGGADGQGPGFWDAALREARMFCRSCVGLRMIGWRR</sequence>
<reference key="1">
    <citation type="journal article" date="2001" name="Genome Res.">
        <title>Sequence and analysis of chromosome I of the amitochondriate intracellular parasite Encephalitozoon cuniculi (Microspora).</title>
        <authorList>
            <person name="Peyret P."/>
            <person name="Katinka M.D."/>
            <person name="Duprat S."/>
            <person name="Duffieux F."/>
            <person name="Barbe V."/>
            <person name="Barbazanges M."/>
            <person name="Weissenbach J."/>
            <person name="Saurin W."/>
            <person name="Vivares C.P."/>
        </authorList>
    </citation>
    <scope>NUCLEOTIDE SEQUENCE [LARGE SCALE GENOMIC DNA]</scope>
    <source>
        <strain>GB-M1</strain>
    </source>
</reference>
<reference key="2">
    <citation type="journal article" date="2001" name="Nature">
        <title>Genome sequence and gene compaction of the eukaryote parasite Encephalitozoon cuniculi.</title>
        <authorList>
            <person name="Katinka M.D."/>
            <person name="Duprat S."/>
            <person name="Cornillot E."/>
            <person name="Metenier G."/>
            <person name="Thomarat F."/>
            <person name="Prensier G."/>
            <person name="Barbe V."/>
            <person name="Peyretaillade E."/>
            <person name="Brottier P."/>
            <person name="Wincker P."/>
            <person name="Delbac F."/>
            <person name="El Alaoui H."/>
            <person name="Peyret P."/>
            <person name="Saurin W."/>
            <person name="Gouy M."/>
            <person name="Weissenbach J."/>
            <person name="Vivares C.P."/>
        </authorList>
    </citation>
    <scope>NUCLEOTIDE SEQUENCE [LARGE SCALE GENOMIC DNA]</scope>
    <source>
        <strain>GB-M1</strain>
    </source>
</reference>
<keyword id="KW-1185">Reference proteome</keyword>